<feature type="chain" id="PRO_0000097472" description="Serine/threonine-protein kinase RsbT">
    <location>
        <begin position="1"/>
        <end position="133"/>
    </location>
</feature>
<feature type="mutagenesis site" description="Loss of kinase activity towards RsbS. Loss of the ability to activate sigma-B in response to salt and ethanol stress while retaining the ability to respond to energy stress." evidence="2">
    <original>D</original>
    <variation>N</variation>
    <location>
        <position position="78"/>
    </location>
</feature>
<evidence type="ECO:0000269" key="1">
    <source>
    </source>
</evidence>
<evidence type="ECO:0000269" key="2">
    <source>
    </source>
</evidence>
<sequence>MNDQSCVRIMTEWDIVAARQLGRNVAKELGFGTVDQARITTAISELARNIYLYAGKGQIGIEQVADRGKKGLKIIAEDQGPGIPDIRKVMEDGFSTSGGLGAGLPGVKRLMDEFSLNSVAGEGTEIQAIKWLR</sequence>
<gene>
    <name type="primary">rsbT</name>
    <name type="synonym">ycxT</name>
    <name type="ordered locus">BSU04690</name>
</gene>
<dbReference type="EC" id="2.7.11.1"/>
<dbReference type="EMBL" id="L35574">
    <property type="protein sequence ID" value="AAA85082.1"/>
    <property type="molecule type" value="Genomic_DNA"/>
</dbReference>
<dbReference type="EMBL" id="AB001488">
    <property type="protein sequence ID" value="BAA19306.1"/>
    <property type="molecule type" value="Genomic_DNA"/>
</dbReference>
<dbReference type="EMBL" id="AL009126">
    <property type="protein sequence ID" value="CAB12276.1"/>
    <property type="molecule type" value="Genomic_DNA"/>
</dbReference>
<dbReference type="EMBL" id="X81652">
    <property type="status" value="NOT_ANNOTATED_CDS"/>
    <property type="molecule type" value="Genomic_DNA"/>
</dbReference>
<dbReference type="PIR" id="G69701">
    <property type="entry name" value="G69701"/>
</dbReference>
<dbReference type="RefSeq" id="NP_388350.1">
    <property type="nucleotide sequence ID" value="NC_000964.3"/>
</dbReference>
<dbReference type="RefSeq" id="WP_003246640.1">
    <property type="nucleotide sequence ID" value="NZ_OZ025638.1"/>
</dbReference>
<dbReference type="SMR" id="P42411"/>
<dbReference type="DIP" id="DIP-402N"/>
<dbReference type="FunCoup" id="P42411">
    <property type="interactions" value="15"/>
</dbReference>
<dbReference type="IntAct" id="P42411">
    <property type="interactions" value="7"/>
</dbReference>
<dbReference type="STRING" id="224308.BSU04690"/>
<dbReference type="PaxDb" id="224308-BSU04690"/>
<dbReference type="EnsemblBacteria" id="CAB12276">
    <property type="protein sequence ID" value="CAB12276"/>
    <property type="gene ID" value="BSU_04690"/>
</dbReference>
<dbReference type="GeneID" id="938168"/>
<dbReference type="KEGG" id="bsu:BSU04690"/>
<dbReference type="PATRIC" id="fig|224308.179.peg.497"/>
<dbReference type="eggNOG" id="COG2172">
    <property type="taxonomic scope" value="Bacteria"/>
</dbReference>
<dbReference type="InParanoid" id="P42411"/>
<dbReference type="OrthoDB" id="9799195at2"/>
<dbReference type="PhylomeDB" id="P42411"/>
<dbReference type="BioCyc" id="BSUB:BSU04690-MONOMER"/>
<dbReference type="Proteomes" id="UP000001570">
    <property type="component" value="Chromosome"/>
</dbReference>
<dbReference type="GO" id="GO:0005524">
    <property type="term" value="F:ATP binding"/>
    <property type="evidence" value="ECO:0007669"/>
    <property type="project" value="UniProtKB-KW"/>
</dbReference>
<dbReference type="GO" id="GO:0106310">
    <property type="term" value="F:protein serine kinase activity"/>
    <property type="evidence" value="ECO:0007669"/>
    <property type="project" value="RHEA"/>
</dbReference>
<dbReference type="GO" id="GO:0004674">
    <property type="term" value="F:protein serine/threonine kinase activity"/>
    <property type="evidence" value="ECO:0007669"/>
    <property type="project" value="UniProtKB-KW"/>
</dbReference>
<dbReference type="CDD" id="cd16934">
    <property type="entry name" value="HATPase_RsbT-like"/>
    <property type="match status" value="1"/>
</dbReference>
<dbReference type="Gene3D" id="3.30.565.10">
    <property type="entry name" value="Histidine kinase-like ATPase, C-terminal domain"/>
    <property type="match status" value="1"/>
</dbReference>
<dbReference type="InterPro" id="IPR036890">
    <property type="entry name" value="HATPase_C_sf"/>
</dbReference>
<dbReference type="Pfam" id="PF02518">
    <property type="entry name" value="HATPase_c"/>
    <property type="match status" value="1"/>
</dbReference>
<dbReference type="SMART" id="SM00387">
    <property type="entry name" value="HATPase_c"/>
    <property type="match status" value="1"/>
</dbReference>
<dbReference type="SUPFAM" id="SSF55874">
    <property type="entry name" value="ATPase domain of HSP90 chaperone/DNA topoisomerase II/histidine kinase"/>
    <property type="match status" value="1"/>
</dbReference>
<keyword id="KW-0067">ATP-binding</keyword>
<keyword id="KW-0418">Kinase</keyword>
<keyword id="KW-0547">Nucleotide-binding</keyword>
<keyword id="KW-1185">Reference proteome</keyword>
<keyword id="KW-0723">Serine/threonine-protein kinase</keyword>
<keyword id="KW-0808">Transferase</keyword>
<comment type="function">
    <text evidence="1 2">Provides the crucial link between the upstream module (communication of environmental stress) and the downstream module (integration of the environmental signals with signals of energy stress) that compose the signal transduction pathway controlling the sigma-B factor. Phosphorylates and inactivates its specific antagonist protein RsbS thanks to its serine kinase activity. Upon phosphorylation of RsbS, RsbT is released to stimulate RsbU, a PP2C phosphatase, thereby initiating the signaling cascade that ultimately activates sigma-B. The activity of the RsbU phosphatase may be stimulated by a long-lived interaction with RsbT and the serine kinase function of RsbT is not required to directly modify RsbU. Also phosphorylates RsbR thanks to its threonine kinase activity, preventing it to phosphorylate RsbT.</text>
</comment>
<comment type="catalytic activity">
    <reaction>
        <text>L-seryl-[protein] + ATP = O-phospho-L-seryl-[protein] + ADP + H(+)</text>
        <dbReference type="Rhea" id="RHEA:17989"/>
        <dbReference type="Rhea" id="RHEA-COMP:9863"/>
        <dbReference type="Rhea" id="RHEA-COMP:11604"/>
        <dbReference type="ChEBI" id="CHEBI:15378"/>
        <dbReference type="ChEBI" id="CHEBI:29999"/>
        <dbReference type="ChEBI" id="CHEBI:30616"/>
        <dbReference type="ChEBI" id="CHEBI:83421"/>
        <dbReference type="ChEBI" id="CHEBI:456216"/>
        <dbReference type="EC" id="2.7.11.1"/>
    </reaction>
</comment>
<comment type="catalytic activity">
    <reaction>
        <text>L-threonyl-[protein] + ATP = O-phospho-L-threonyl-[protein] + ADP + H(+)</text>
        <dbReference type="Rhea" id="RHEA:46608"/>
        <dbReference type="Rhea" id="RHEA-COMP:11060"/>
        <dbReference type="Rhea" id="RHEA-COMP:11605"/>
        <dbReference type="ChEBI" id="CHEBI:15378"/>
        <dbReference type="ChEBI" id="CHEBI:30013"/>
        <dbReference type="ChEBI" id="CHEBI:30616"/>
        <dbReference type="ChEBI" id="CHEBI:61977"/>
        <dbReference type="ChEBI" id="CHEBI:456216"/>
        <dbReference type="EC" id="2.7.11.1"/>
    </reaction>
</comment>
<comment type="interaction">
    <interactant intactId="EBI-5247957">
        <id>P42411</id>
    </interactant>
    <interactant intactId="EBI-5247936">
        <id>P42410</id>
        <label>rsbS</label>
    </interactant>
    <organismsDiffer>false</organismsDiffer>
    <experiments>2</experiments>
</comment>
<comment type="interaction">
    <interactant intactId="EBI-5247957">
        <id>P42411</id>
    </interactant>
    <interactant intactId="EBI-5255200">
        <id>O31435</id>
        <label>ybdM</label>
    </interactant>
    <organismsDiffer>false</organismsDiffer>
    <experiments>3</experiments>
</comment>
<accession>P42411</accession>
<name>RSBT_BACSU</name>
<reference key="1">
    <citation type="journal article" date="1995" name="J. Bacteriol.">
        <title>Four additional genes in the sigB operon of Bacillus subtilis that control activity of the general stress factor sigma B in response to environmental signals.</title>
        <authorList>
            <person name="Wise A.A."/>
            <person name="Price C.W."/>
        </authorList>
    </citation>
    <scope>NUCLEOTIDE SEQUENCE [GENOMIC DNA]</scope>
    <source>
        <strain>168 / Marburg / ATCC 6051 / DSM 10 / JCM 1465 / NBRC 13719 / NCIMB 3610 / NRRL NRS-744 / VKM B-501</strain>
    </source>
</reference>
<reference key="2">
    <citation type="submission" date="1997-03" db="EMBL/GenBank/DDBJ databases">
        <title>A 148 kbp sequence of the region between 35 and 47 degree of the Bacillus subtilis genome.</title>
        <authorList>
            <person name="Kasahara Y."/>
            <person name="Nakai S."/>
            <person name="Lee S."/>
            <person name="Sadaie Y."/>
            <person name="Ogasawara N."/>
        </authorList>
    </citation>
    <scope>NUCLEOTIDE SEQUENCE [GENOMIC DNA]</scope>
    <source>
        <strain>168</strain>
    </source>
</reference>
<reference key="3">
    <citation type="journal article" date="1997" name="Nature">
        <title>The complete genome sequence of the Gram-positive bacterium Bacillus subtilis.</title>
        <authorList>
            <person name="Kunst F."/>
            <person name="Ogasawara N."/>
            <person name="Moszer I."/>
            <person name="Albertini A.M."/>
            <person name="Alloni G."/>
            <person name="Azevedo V."/>
            <person name="Bertero M.G."/>
            <person name="Bessieres P."/>
            <person name="Bolotin A."/>
            <person name="Borchert S."/>
            <person name="Borriss R."/>
            <person name="Boursier L."/>
            <person name="Brans A."/>
            <person name="Braun M."/>
            <person name="Brignell S.C."/>
            <person name="Bron S."/>
            <person name="Brouillet S."/>
            <person name="Bruschi C.V."/>
            <person name="Caldwell B."/>
            <person name="Capuano V."/>
            <person name="Carter N.M."/>
            <person name="Choi S.-K."/>
            <person name="Codani J.-J."/>
            <person name="Connerton I.F."/>
            <person name="Cummings N.J."/>
            <person name="Daniel R.A."/>
            <person name="Denizot F."/>
            <person name="Devine K.M."/>
            <person name="Duesterhoeft A."/>
            <person name="Ehrlich S.D."/>
            <person name="Emmerson P.T."/>
            <person name="Entian K.-D."/>
            <person name="Errington J."/>
            <person name="Fabret C."/>
            <person name="Ferrari E."/>
            <person name="Foulger D."/>
            <person name="Fritz C."/>
            <person name="Fujita M."/>
            <person name="Fujita Y."/>
            <person name="Fuma S."/>
            <person name="Galizzi A."/>
            <person name="Galleron N."/>
            <person name="Ghim S.-Y."/>
            <person name="Glaser P."/>
            <person name="Goffeau A."/>
            <person name="Golightly E.J."/>
            <person name="Grandi G."/>
            <person name="Guiseppi G."/>
            <person name="Guy B.J."/>
            <person name="Haga K."/>
            <person name="Haiech J."/>
            <person name="Harwood C.R."/>
            <person name="Henaut A."/>
            <person name="Hilbert H."/>
            <person name="Holsappel S."/>
            <person name="Hosono S."/>
            <person name="Hullo M.-F."/>
            <person name="Itaya M."/>
            <person name="Jones L.-M."/>
            <person name="Joris B."/>
            <person name="Karamata D."/>
            <person name="Kasahara Y."/>
            <person name="Klaerr-Blanchard M."/>
            <person name="Klein C."/>
            <person name="Kobayashi Y."/>
            <person name="Koetter P."/>
            <person name="Koningstein G."/>
            <person name="Krogh S."/>
            <person name="Kumano M."/>
            <person name="Kurita K."/>
            <person name="Lapidus A."/>
            <person name="Lardinois S."/>
            <person name="Lauber J."/>
            <person name="Lazarevic V."/>
            <person name="Lee S.-M."/>
            <person name="Levine A."/>
            <person name="Liu H."/>
            <person name="Masuda S."/>
            <person name="Mauel C."/>
            <person name="Medigue C."/>
            <person name="Medina N."/>
            <person name="Mellado R.P."/>
            <person name="Mizuno M."/>
            <person name="Moestl D."/>
            <person name="Nakai S."/>
            <person name="Noback M."/>
            <person name="Noone D."/>
            <person name="O'Reilly M."/>
            <person name="Ogawa K."/>
            <person name="Ogiwara A."/>
            <person name="Oudega B."/>
            <person name="Park S.-H."/>
            <person name="Parro V."/>
            <person name="Pohl T.M."/>
            <person name="Portetelle D."/>
            <person name="Porwollik S."/>
            <person name="Prescott A.M."/>
            <person name="Presecan E."/>
            <person name="Pujic P."/>
            <person name="Purnelle B."/>
            <person name="Rapoport G."/>
            <person name="Rey M."/>
            <person name="Reynolds S."/>
            <person name="Rieger M."/>
            <person name="Rivolta C."/>
            <person name="Rocha E."/>
            <person name="Roche B."/>
            <person name="Rose M."/>
            <person name="Sadaie Y."/>
            <person name="Sato T."/>
            <person name="Scanlan E."/>
            <person name="Schleich S."/>
            <person name="Schroeter R."/>
            <person name="Scoffone F."/>
            <person name="Sekiguchi J."/>
            <person name="Sekowska A."/>
            <person name="Seror S.J."/>
            <person name="Serror P."/>
            <person name="Shin B.-S."/>
            <person name="Soldo B."/>
            <person name="Sorokin A."/>
            <person name="Tacconi E."/>
            <person name="Takagi T."/>
            <person name="Takahashi H."/>
            <person name="Takemaru K."/>
            <person name="Takeuchi M."/>
            <person name="Tamakoshi A."/>
            <person name="Tanaka T."/>
            <person name="Terpstra P."/>
            <person name="Tognoni A."/>
            <person name="Tosato V."/>
            <person name="Uchiyama S."/>
            <person name="Vandenbol M."/>
            <person name="Vannier F."/>
            <person name="Vassarotti A."/>
            <person name="Viari A."/>
            <person name="Wambutt R."/>
            <person name="Wedler E."/>
            <person name="Wedler H."/>
            <person name="Weitzenegger T."/>
            <person name="Winters P."/>
            <person name="Wipat A."/>
            <person name="Yamamoto H."/>
            <person name="Yamane K."/>
            <person name="Yasumoto K."/>
            <person name="Yata K."/>
            <person name="Yoshida K."/>
            <person name="Yoshikawa H.-F."/>
            <person name="Zumstein E."/>
            <person name="Yoshikawa H."/>
            <person name="Danchin A."/>
        </authorList>
    </citation>
    <scope>NUCLEOTIDE SEQUENCE [LARGE SCALE GENOMIC DNA]</scope>
    <source>
        <strain>168</strain>
    </source>
</reference>
<reference key="4">
    <citation type="journal article" date="1995" name="J. Bacteriol.">
        <title>The Bacillus subtilis rsbU gene product is necessary for RsbX-dependent regulation of sigma B.</title>
        <authorList>
            <person name="Voelker U."/>
            <person name="Dufour A."/>
            <person name="Haldenwang W.G."/>
        </authorList>
    </citation>
    <scope>NUCLEOTIDE SEQUENCE [GENOMIC DNA] OF 113-133</scope>
    <source>
        <strain>168 / BSA46</strain>
    </source>
</reference>
<reference key="5">
    <citation type="journal article" date="1996" name="Genes Dev.">
        <title>Opposing pairs of serine protein kinases and phosphatases transmit signals of environmental stress to activate a bacterial transcription factor.</title>
        <authorList>
            <person name="Yang X."/>
            <person name="Kang C.M."/>
            <person name="Brody M.S."/>
            <person name="Price C.W."/>
        </authorList>
    </citation>
    <scope>FUNCTION</scope>
    <source>
        <strain>168 / Marburg / ATCC 6051 / DSM 10 / JCM 1465 / NBRC 13719 / NCIMB 3610 / NRRL NRS-744 / VKM B-501</strain>
    </source>
</reference>
<reference key="6">
    <citation type="journal article" date="1998" name="Mol. Microbiol.">
        <title>Serine kinase activity of a Bacillus subtilis switch protein is required to transduce environmental stress signals but not to activate its target PP2C phosphatase.</title>
        <authorList>
            <person name="Kang C.M."/>
            <person name="Vijay K."/>
            <person name="Price C.W."/>
        </authorList>
    </citation>
    <scope>FUNCTION</scope>
    <scope>MUTAGENESIS OF ASP-78</scope>
    <source>
        <strain>168 / Marburg / ATCC 6051 / DSM 10 / JCM 1465 / NBRC 13719 / NCIMB 3610 / NRRL NRS-744 / VKM B-501</strain>
    </source>
</reference>
<organism>
    <name type="scientific">Bacillus subtilis (strain 168)</name>
    <dbReference type="NCBI Taxonomy" id="224308"/>
    <lineage>
        <taxon>Bacteria</taxon>
        <taxon>Bacillati</taxon>
        <taxon>Bacillota</taxon>
        <taxon>Bacilli</taxon>
        <taxon>Bacillales</taxon>
        <taxon>Bacillaceae</taxon>
        <taxon>Bacillus</taxon>
    </lineage>
</organism>
<proteinExistence type="evidence at protein level"/>
<protein>
    <recommendedName>
        <fullName>Serine/threonine-protein kinase RsbT</fullName>
        <ecNumber>2.7.11.1</ecNumber>
    </recommendedName>
    <alternativeName>
        <fullName>Anti-sigma-B factor RsbT</fullName>
    </alternativeName>
    <alternativeName>
        <fullName>Switch protein/serine kinase</fullName>
    </alternativeName>
</protein>